<keyword id="KW-0027">Amidation</keyword>
<keyword id="KW-0903">Direct protein sequencing</keyword>
<keyword id="KW-1015">Disulfide bond</keyword>
<keyword id="KW-0372">Hormone</keyword>
<keyword id="KW-0527">Neuropeptide</keyword>
<keyword id="KW-0964">Secreted</keyword>
<reference key="1">
    <citation type="journal article" date="1993" name="Biol. Chem. Hoppe-Seyler">
        <title>Isolation and identification of a cardioactive peptide from Tenebrio molitor and Spodoptera eridania.</title>
        <authorList>
            <person name="Furuya K."/>
            <person name="Liao S."/>
            <person name="Reynolds S.E."/>
            <person name="Ota R.B."/>
            <person name="Hackett M."/>
            <person name="Schooley D.A."/>
        </authorList>
    </citation>
    <scope>PROTEIN SEQUENCE</scope>
    <scope>AMIDATION AT CYS-9</scope>
    <source>
        <tissue>Head</tissue>
    </source>
</reference>
<sequence length="9" mass="959">PFCNAFTGC</sequence>
<accession>P84121</accession>
<accession>P38556</accession>
<name>CCAP_SPOER</name>
<proteinExistence type="evidence at protein level"/>
<protein>
    <recommendedName>
        <fullName>Cardioactive peptide</fullName>
    </recommendedName>
    <alternativeName>
        <fullName>Crustacean cardioactive peptide</fullName>
        <shortName>CCAP</shortName>
    </alternativeName>
</protein>
<organism>
    <name type="scientific">Spodoptera eridania</name>
    <name type="common">Southern armyworm</name>
    <dbReference type="NCBI Taxonomy" id="37547"/>
    <lineage>
        <taxon>Eukaryota</taxon>
        <taxon>Metazoa</taxon>
        <taxon>Ecdysozoa</taxon>
        <taxon>Arthropoda</taxon>
        <taxon>Hexapoda</taxon>
        <taxon>Insecta</taxon>
        <taxon>Pterygota</taxon>
        <taxon>Neoptera</taxon>
        <taxon>Endopterygota</taxon>
        <taxon>Lepidoptera</taxon>
        <taxon>Glossata</taxon>
        <taxon>Ditrysia</taxon>
        <taxon>Noctuoidea</taxon>
        <taxon>Noctuidae</taxon>
        <taxon>Amphipyrinae</taxon>
        <taxon>Spodoptera</taxon>
    </lineage>
</organism>
<dbReference type="GO" id="GO:0005576">
    <property type="term" value="C:extracellular region"/>
    <property type="evidence" value="ECO:0007669"/>
    <property type="project" value="UniProtKB-SubCell"/>
</dbReference>
<dbReference type="GO" id="GO:0005179">
    <property type="term" value="F:hormone activity"/>
    <property type="evidence" value="ECO:0007669"/>
    <property type="project" value="UniProtKB-KW"/>
</dbReference>
<dbReference type="GO" id="GO:0007218">
    <property type="term" value="P:neuropeptide signaling pathway"/>
    <property type="evidence" value="ECO:0007669"/>
    <property type="project" value="UniProtKB-KW"/>
</dbReference>
<feature type="peptide" id="PRO_0000044116" description="Cardioactive peptide">
    <location>
        <begin position="1"/>
        <end position="9"/>
    </location>
</feature>
<feature type="modified residue" description="Cysteine amide" evidence="2">
    <location>
        <position position="9"/>
    </location>
</feature>
<feature type="disulfide bond">
    <location>
        <begin position="3"/>
        <end position="9"/>
    </location>
</feature>
<comment type="function">
    <text>Cardioregulatory neurohormone that increases heart beat rate during adult wing inflation; has no effect on beat amplitude. The effect of CCAP is both ino- and chronotropic.</text>
</comment>
<comment type="subcellular location">
    <subcellularLocation>
        <location evidence="1">Secreted</location>
    </subcellularLocation>
</comment>
<evidence type="ECO:0000250" key="1"/>
<evidence type="ECO:0000269" key="2">
    <source>
    </source>
</evidence>